<reference key="1">
    <citation type="journal article" date="2002" name="Nucleic Acids Res.">
        <title>Genome sequence of Shigella flexneri 2a: insights into pathogenicity through comparison with genomes of Escherichia coli K12 and O157.</title>
        <authorList>
            <person name="Jin Q."/>
            <person name="Yuan Z."/>
            <person name="Xu J."/>
            <person name="Wang Y."/>
            <person name="Shen Y."/>
            <person name="Lu W."/>
            <person name="Wang J."/>
            <person name="Liu H."/>
            <person name="Yang J."/>
            <person name="Yang F."/>
            <person name="Zhang X."/>
            <person name="Zhang J."/>
            <person name="Yang G."/>
            <person name="Wu H."/>
            <person name="Qu D."/>
            <person name="Dong J."/>
            <person name="Sun L."/>
            <person name="Xue Y."/>
            <person name="Zhao A."/>
            <person name="Gao Y."/>
            <person name="Zhu J."/>
            <person name="Kan B."/>
            <person name="Ding K."/>
            <person name="Chen S."/>
            <person name="Cheng H."/>
            <person name="Yao Z."/>
            <person name="He B."/>
            <person name="Chen R."/>
            <person name="Ma D."/>
            <person name="Qiang B."/>
            <person name="Wen Y."/>
            <person name="Hou Y."/>
            <person name="Yu J."/>
        </authorList>
    </citation>
    <scope>NUCLEOTIDE SEQUENCE [LARGE SCALE GENOMIC DNA]</scope>
    <source>
        <strain>301 / Serotype 2a</strain>
    </source>
</reference>
<reference key="2">
    <citation type="journal article" date="2003" name="Infect. Immun.">
        <title>Complete genome sequence and comparative genomics of Shigella flexneri serotype 2a strain 2457T.</title>
        <authorList>
            <person name="Wei J."/>
            <person name="Goldberg M.B."/>
            <person name="Burland V."/>
            <person name="Venkatesan M.M."/>
            <person name="Deng W."/>
            <person name="Fournier G."/>
            <person name="Mayhew G.F."/>
            <person name="Plunkett G. III"/>
            <person name="Rose D.J."/>
            <person name="Darling A."/>
            <person name="Mau B."/>
            <person name="Perna N.T."/>
            <person name="Payne S.M."/>
            <person name="Runyen-Janecky L.J."/>
            <person name="Zhou S."/>
            <person name="Schwartz D.C."/>
            <person name="Blattner F.R."/>
        </authorList>
    </citation>
    <scope>NUCLEOTIDE SEQUENCE [LARGE SCALE GENOMIC DNA]</scope>
    <source>
        <strain>ATCC 700930 / 2457T / Serotype 2a</strain>
    </source>
</reference>
<evidence type="ECO:0000250" key="1"/>
<evidence type="ECO:0000255" key="2">
    <source>
        <dbReference type="HAMAP-Rule" id="MF_00451"/>
    </source>
</evidence>
<evidence type="ECO:0000305" key="3"/>
<keyword id="KW-0067">ATP-binding</keyword>
<keyword id="KW-0963">Cytoplasm</keyword>
<keyword id="KW-0418">Kinase</keyword>
<keyword id="KW-0460">Magnesium</keyword>
<keyword id="KW-0479">Metal-binding</keyword>
<keyword id="KW-0546">Nucleotide metabolism</keyword>
<keyword id="KW-0547">Nucleotide-binding</keyword>
<keyword id="KW-0597">Phosphoprotein</keyword>
<keyword id="KW-1185">Reference proteome</keyword>
<keyword id="KW-0808">Transferase</keyword>
<gene>
    <name evidence="2" type="primary">ndk</name>
    <name type="ordered locus">SF2564</name>
    <name type="ordered locus">S2736</name>
</gene>
<dbReference type="EC" id="2.7.4.6" evidence="2"/>
<dbReference type="EMBL" id="AE005674">
    <property type="protein sequence ID" value="AAN44064.1"/>
    <property type="molecule type" value="Genomic_DNA"/>
</dbReference>
<dbReference type="EMBL" id="AE014073">
    <property type="protein sequence ID" value="AAP17891.1"/>
    <property type="molecule type" value="Genomic_DNA"/>
</dbReference>
<dbReference type="RefSeq" id="NP_708357.1">
    <property type="nucleotide sequence ID" value="NC_004337.2"/>
</dbReference>
<dbReference type="RefSeq" id="WP_000963837.1">
    <property type="nucleotide sequence ID" value="NZ_WPGW01000078.1"/>
</dbReference>
<dbReference type="SMR" id="P0A765"/>
<dbReference type="STRING" id="198214.SF2564"/>
<dbReference type="PaxDb" id="198214-SF2564"/>
<dbReference type="GeneID" id="1027584"/>
<dbReference type="GeneID" id="93774618"/>
<dbReference type="KEGG" id="sfl:SF2564"/>
<dbReference type="KEGG" id="sfx:S2736"/>
<dbReference type="PATRIC" id="fig|198214.7.peg.3062"/>
<dbReference type="HOGENOM" id="CLU_060216_8_1_6"/>
<dbReference type="Proteomes" id="UP000001006">
    <property type="component" value="Chromosome"/>
</dbReference>
<dbReference type="Proteomes" id="UP000002673">
    <property type="component" value="Chromosome"/>
</dbReference>
<dbReference type="GO" id="GO:0005737">
    <property type="term" value="C:cytoplasm"/>
    <property type="evidence" value="ECO:0007669"/>
    <property type="project" value="UniProtKB-SubCell"/>
</dbReference>
<dbReference type="GO" id="GO:0005524">
    <property type="term" value="F:ATP binding"/>
    <property type="evidence" value="ECO:0007669"/>
    <property type="project" value="UniProtKB-UniRule"/>
</dbReference>
<dbReference type="GO" id="GO:0046872">
    <property type="term" value="F:metal ion binding"/>
    <property type="evidence" value="ECO:0007669"/>
    <property type="project" value="UniProtKB-KW"/>
</dbReference>
<dbReference type="GO" id="GO:0004550">
    <property type="term" value="F:nucleoside diphosphate kinase activity"/>
    <property type="evidence" value="ECO:0007669"/>
    <property type="project" value="UniProtKB-UniRule"/>
</dbReference>
<dbReference type="GO" id="GO:0006241">
    <property type="term" value="P:CTP biosynthetic process"/>
    <property type="evidence" value="ECO:0007669"/>
    <property type="project" value="UniProtKB-UniRule"/>
</dbReference>
<dbReference type="GO" id="GO:0006183">
    <property type="term" value="P:GTP biosynthetic process"/>
    <property type="evidence" value="ECO:0007669"/>
    <property type="project" value="UniProtKB-UniRule"/>
</dbReference>
<dbReference type="GO" id="GO:0006228">
    <property type="term" value="P:UTP biosynthetic process"/>
    <property type="evidence" value="ECO:0007669"/>
    <property type="project" value="UniProtKB-UniRule"/>
</dbReference>
<dbReference type="CDD" id="cd04413">
    <property type="entry name" value="NDPk_I"/>
    <property type="match status" value="1"/>
</dbReference>
<dbReference type="FunFam" id="3.30.70.141:FF:000001">
    <property type="entry name" value="Nucleoside diphosphate kinase"/>
    <property type="match status" value="1"/>
</dbReference>
<dbReference type="Gene3D" id="3.30.70.141">
    <property type="entry name" value="Nucleoside diphosphate kinase-like domain"/>
    <property type="match status" value="1"/>
</dbReference>
<dbReference type="HAMAP" id="MF_00451">
    <property type="entry name" value="NDP_kinase"/>
    <property type="match status" value="1"/>
</dbReference>
<dbReference type="InterPro" id="IPR034907">
    <property type="entry name" value="NDK-like_dom"/>
</dbReference>
<dbReference type="InterPro" id="IPR036850">
    <property type="entry name" value="NDK-like_dom_sf"/>
</dbReference>
<dbReference type="InterPro" id="IPR001564">
    <property type="entry name" value="Nucleoside_diP_kinase"/>
</dbReference>
<dbReference type="InterPro" id="IPR023005">
    <property type="entry name" value="Nucleoside_diP_kinase_AS"/>
</dbReference>
<dbReference type="NCBIfam" id="NF001908">
    <property type="entry name" value="PRK00668.1"/>
    <property type="match status" value="1"/>
</dbReference>
<dbReference type="PANTHER" id="PTHR46161">
    <property type="entry name" value="NUCLEOSIDE DIPHOSPHATE KINASE"/>
    <property type="match status" value="1"/>
</dbReference>
<dbReference type="PANTHER" id="PTHR46161:SF3">
    <property type="entry name" value="NUCLEOSIDE DIPHOSPHATE KINASE DDB_G0292928-RELATED"/>
    <property type="match status" value="1"/>
</dbReference>
<dbReference type="Pfam" id="PF00334">
    <property type="entry name" value="NDK"/>
    <property type="match status" value="1"/>
</dbReference>
<dbReference type="PRINTS" id="PR01243">
    <property type="entry name" value="NUCDPKINASE"/>
</dbReference>
<dbReference type="SMART" id="SM00562">
    <property type="entry name" value="NDK"/>
    <property type="match status" value="1"/>
</dbReference>
<dbReference type="SUPFAM" id="SSF54919">
    <property type="entry name" value="Nucleoside diphosphate kinase, NDK"/>
    <property type="match status" value="1"/>
</dbReference>
<dbReference type="PROSITE" id="PS00469">
    <property type="entry name" value="NDPK"/>
    <property type="match status" value="1"/>
</dbReference>
<dbReference type="PROSITE" id="PS51374">
    <property type="entry name" value="NDPK_LIKE"/>
    <property type="match status" value="1"/>
</dbReference>
<proteinExistence type="inferred from homology"/>
<sequence>MAIERTFSIIKPNAVAKNVIGNIFARFEAAGFKIVGTKMLHLTVEQARGFYAEHDGKPFFDGLVEFMTSGPIVVSVLEGENAVQRHRDLLGATNPANALAGTLRADYADSLTENGTHGSDSVESAAREIAYFFGEGEVCPRTR</sequence>
<organism>
    <name type="scientific">Shigella flexneri</name>
    <dbReference type="NCBI Taxonomy" id="623"/>
    <lineage>
        <taxon>Bacteria</taxon>
        <taxon>Pseudomonadati</taxon>
        <taxon>Pseudomonadota</taxon>
        <taxon>Gammaproteobacteria</taxon>
        <taxon>Enterobacterales</taxon>
        <taxon>Enterobacteriaceae</taxon>
        <taxon>Shigella</taxon>
    </lineage>
</organism>
<name>NDK_SHIFL</name>
<accession>P0A765</accession>
<accession>P24233</accession>
<protein>
    <recommendedName>
        <fullName evidence="2">Nucleoside diphosphate kinase</fullName>
        <shortName evidence="2">NDK</shortName>
        <shortName evidence="2">NDP kinase</shortName>
        <ecNumber evidence="2">2.7.4.6</ecNumber>
    </recommendedName>
    <alternativeName>
        <fullName evidence="2">Nucleoside-2-P kinase</fullName>
    </alternativeName>
</protein>
<feature type="initiator methionine" description="Removed" evidence="1">
    <location>
        <position position="1"/>
    </location>
</feature>
<feature type="chain" id="PRO_0000137042" description="Nucleoside diphosphate kinase">
    <location>
        <begin position="2"/>
        <end position="143"/>
    </location>
</feature>
<feature type="active site" description="Pros-phosphohistidine intermediate" evidence="2">
    <location>
        <position position="117"/>
    </location>
</feature>
<feature type="binding site" evidence="2">
    <location>
        <position position="11"/>
    </location>
    <ligand>
        <name>ATP</name>
        <dbReference type="ChEBI" id="CHEBI:30616"/>
    </ligand>
</feature>
<feature type="binding site" evidence="2">
    <location>
        <position position="59"/>
    </location>
    <ligand>
        <name>ATP</name>
        <dbReference type="ChEBI" id="CHEBI:30616"/>
    </ligand>
</feature>
<feature type="binding site" evidence="2">
    <location>
        <position position="87"/>
    </location>
    <ligand>
        <name>ATP</name>
        <dbReference type="ChEBI" id="CHEBI:30616"/>
    </ligand>
</feature>
<feature type="binding site" evidence="2">
    <location>
        <position position="93"/>
    </location>
    <ligand>
        <name>ATP</name>
        <dbReference type="ChEBI" id="CHEBI:30616"/>
    </ligand>
</feature>
<feature type="binding site" evidence="2">
    <location>
        <position position="104"/>
    </location>
    <ligand>
        <name>ATP</name>
        <dbReference type="ChEBI" id="CHEBI:30616"/>
    </ligand>
</feature>
<feature type="binding site" evidence="2">
    <location>
        <position position="114"/>
    </location>
    <ligand>
        <name>ATP</name>
        <dbReference type="ChEBI" id="CHEBI:30616"/>
    </ligand>
</feature>
<comment type="function">
    <text evidence="2">Major role in the synthesis of nucleoside triphosphates other than ATP. The ATP gamma phosphate is transferred to the NDP beta phosphate via a ping-pong mechanism, using a phosphorylated active-site intermediate.</text>
</comment>
<comment type="catalytic activity">
    <reaction evidence="2">
        <text>a 2'-deoxyribonucleoside 5'-diphosphate + ATP = a 2'-deoxyribonucleoside 5'-triphosphate + ADP</text>
        <dbReference type="Rhea" id="RHEA:44640"/>
        <dbReference type="ChEBI" id="CHEBI:30616"/>
        <dbReference type="ChEBI" id="CHEBI:61560"/>
        <dbReference type="ChEBI" id="CHEBI:73316"/>
        <dbReference type="ChEBI" id="CHEBI:456216"/>
        <dbReference type="EC" id="2.7.4.6"/>
    </reaction>
</comment>
<comment type="catalytic activity">
    <reaction evidence="2">
        <text>a ribonucleoside 5'-diphosphate + ATP = a ribonucleoside 5'-triphosphate + ADP</text>
        <dbReference type="Rhea" id="RHEA:18113"/>
        <dbReference type="ChEBI" id="CHEBI:30616"/>
        <dbReference type="ChEBI" id="CHEBI:57930"/>
        <dbReference type="ChEBI" id="CHEBI:61557"/>
        <dbReference type="ChEBI" id="CHEBI:456216"/>
        <dbReference type="EC" id="2.7.4.6"/>
    </reaction>
</comment>
<comment type="cofactor">
    <cofactor evidence="2">
        <name>Mg(2+)</name>
        <dbReference type="ChEBI" id="CHEBI:18420"/>
    </cofactor>
</comment>
<comment type="subunit">
    <text evidence="2">Homotetramer.</text>
</comment>
<comment type="subcellular location">
    <subcellularLocation>
        <location evidence="2">Cytoplasm</location>
    </subcellularLocation>
</comment>
<comment type="similarity">
    <text evidence="2 3">Belongs to the NDK family.</text>
</comment>